<protein>
    <recommendedName>
        <fullName evidence="1">4-deoxy-L-threo-5-hexosulose-uronate ketol-isomerase</fullName>
        <ecNumber evidence="1">5.3.1.17</ecNumber>
    </recommendedName>
    <alternativeName>
        <fullName evidence="1">5-keto-4-deoxyuronate isomerase</fullName>
    </alternativeName>
    <alternativeName>
        <fullName evidence="1">DKI isomerase</fullName>
    </alternativeName>
</protein>
<feature type="chain" id="PRO_1000083089" description="4-deoxy-L-threo-5-hexosulose-uronate ketol-isomerase">
    <location>
        <begin position="1"/>
        <end position="278"/>
    </location>
</feature>
<feature type="binding site" evidence="1">
    <location>
        <position position="196"/>
    </location>
    <ligand>
        <name>Zn(2+)</name>
        <dbReference type="ChEBI" id="CHEBI:29105"/>
    </ligand>
</feature>
<feature type="binding site" evidence="1">
    <location>
        <position position="198"/>
    </location>
    <ligand>
        <name>Zn(2+)</name>
        <dbReference type="ChEBI" id="CHEBI:29105"/>
    </ligand>
</feature>
<feature type="binding site" evidence="1">
    <location>
        <position position="203"/>
    </location>
    <ligand>
        <name>Zn(2+)</name>
        <dbReference type="ChEBI" id="CHEBI:29105"/>
    </ligand>
</feature>
<feature type="binding site" evidence="1">
    <location>
        <position position="245"/>
    </location>
    <ligand>
        <name>Zn(2+)</name>
        <dbReference type="ChEBI" id="CHEBI:29105"/>
    </ligand>
</feature>
<sequence>MDVRQSIHSAHAKTLDTQGLRNEFLVEKVFVADEYTMVYSHIDRIIVGGIMPITKTVSVGGEVGKQLGVSYFLERRELGVINIGGAGTITVDGQCYEIGHRDALYVGKGAKEVVFASIDTGTPAKFYYNCAPAHTTYPTKKVTPDEVSPVTLGDNLTSNRRTINKYFVPDVLETCQLSMGLTELAPGNLWNTMPCHTHERRMEVYFYFNMDDDACVFHMMGQPQETRHIVMHNEQAVISPSWSIHSGVGTKAYTFIWGMVGENQVFDDMDHVAVKDLR</sequence>
<accession>B1IU01</accession>
<reference key="1">
    <citation type="submission" date="2008-02" db="EMBL/GenBank/DDBJ databases">
        <title>Complete sequence of Escherichia coli C str. ATCC 8739.</title>
        <authorList>
            <person name="Copeland A."/>
            <person name="Lucas S."/>
            <person name="Lapidus A."/>
            <person name="Glavina del Rio T."/>
            <person name="Dalin E."/>
            <person name="Tice H."/>
            <person name="Bruce D."/>
            <person name="Goodwin L."/>
            <person name="Pitluck S."/>
            <person name="Kiss H."/>
            <person name="Brettin T."/>
            <person name="Detter J.C."/>
            <person name="Han C."/>
            <person name="Kuske C.R."/>
            <person name="Schmutz J."/>
            <person name="Larimer F."/>
            <person name="Land M."/>
            <person name="Hauser L."/>
            <person name="Kyrpides N."/>
            <person name="Mikhailova N."/>
            <person name="Ingram L."/>
            <person name="Richardson P."/>
        </authorList>
    </citation>
    <scope>NUCLEOTIDE SEQUENCE [LARGE SCALE GENOMIC DNA]</scope>
    <source>
        <strain>ATCC 8739 / DSM 1576 / NBRC 3972 / NCIMB 8545 / WDCM 00012 / Crooks</strain>
    </source>
</reference>
<dbReference type="EC" id="5.3.1.17" evidence="1"/>
<dbReference type="EMBL" id="CP000946">
    <property type="protein sequence ID" value="ACA76541.1"/>
    <property type="molecule type" value="Genomic_DNA"/>
</dbReference>
<dbReference type="RefSeq" id="WP_000383237.1">
    <property type="nucleotide sequence ID" value="NZ_MTFT01000004.1"/>
</dbReference>
<dbReference type="SMR" id="B1IU01"/>
<dbReference type="GeneID" id="75203765"/>
<dbReference type="KEGG" id="ecl:EcolC_0872"/>
<dbReference type="HOGENOM" id="CLU_062609_0_0_6"/>
<dbReference type="UniPathway" id="UPA00545">
    <property type="reaction ID" value="UER00826"/>
</dbReference>
<dbReference type="GO" id="GO:0008697">
    <property type="term" value="F:4-deoxy-L-threo-5-hexosulose-uronate ketol-isomerase activity"/>
    <property type="evidence" value="ECO:0007669"/>
    <property type="project" value="UniProtKB-UniRule"/>
</dbReference>
<dbReference type="GO" id="GO:0008270">
    <property type="term" value="F:zinc ion binding"/>
    <property type="evidence" value="ECO:0007669"/>
    <property type="project" value="UniProtKB-UniRule"/>
</dbReference>
<dbReference type="GO" id="GO:0019698">
    <property type="term" value="P:D-galacturonate catabolic process"/>
    <property type="evidence" value="ECO:0007669"/>
    <property type="project" value="TreeGrafter"/>
</dbReference>
<dbReference type="GO" id="GO:0042840">
    <property type="term" value="P:D-glucuronate catabolic process"/>
    <property type="evidence" value="ECO:0007669"/>
    <property type="project" value="TreeGrafter"/>
</dbReference>
<dbReference type="GO" id="GO:0045490">
    <property type="term" value="P:pectin catabolic process"/>
    <property type="evidence" value="ECO:0007669"/>
    <property type="project" value="UniProtKB-UniRule"/>
</dbReference>
<dbReference type="CDD" id="cd20491">
    <property type="entry name" value="cupin_KduI_C"/>
    <property type="match status" value="1"/>
</dbReference>
<dbReference type="CDD" id="cd20294">
    <property type="entry name" value="cupin_KduI_N"/>
    <property type="match status" value="1"/>
</dbReference>
<dbReference type="FunFam" id="2.60.120.10:FF:000018">
    <property type="entry name" value="4-deoxy-L-threo-5-hexosulose-uronate ketol-isomerase"/>
    <property type="match status" value="1"/>
</dbReference>
<dbReference type="FunFam" id="2.60.120.520:FF:000001">
    <property type="entry name" value="4-deoxy-L-threo-5-hexosulose-uronate ketol-isomerase"/>
    <property type="match status" value="1"/>
</dbReference>
<dbReference type="Gene3D" id="2.60.120.10">
    <property type="entry name" value="Jelly Rolls"/>
    <property type="match status" value="1"/>
</dbReference>
<dbReference type="Gene3D" id="2.60.120.520">
    <property type="entry name" value="pectin degrading enzyme 5-keto 4- deoxyuronate isomerase, domain 1"/>
    <property type="match status" value="1"/>
</dbReference>
<dbReference type="HAMAP" id="MF_00687">
    <property type="entry name" value="KduI"/>
    <property type="match status" value="1"/>
</dbReference>
<dbReference type="InterPro" id="IPR007045">
    <property type="entry name" value="KduI"/>
</dbReference>
<dbReference type="InterPro" id="IPR021120">
    <property type="entry name" value="KduI/IolB_isomerase"/>
</dbReference>
<dbReference type="InterPro" id="IPR027449">
    <property type="entry name" value="KduI_N"/>
</dbReference>
<dbReference type="InterPro" id="IPR014710">
    <property type="entry name" value="RmlC-like_jellyroll"/>
</dbReference>
<dbReference type="InterPro" id="IPR011051">
    <property type="entry name" value="RmlC_Cupin_sf"/>
</dbReference>
<dbReference type="NCBIfam" id="NF002091">
    <property type="entry name" value="PRK00924.1"/>
    <property type="match status" value="1"/>
</dbReference>
<dbReference type="PANTHER" id="PTHR38461">
    <property type="entry name" value="4-DEOXY-L-THREO-5-HEXOSULOSE-URONATE KETOL-ISOMERASE"/>
    <property type="match status" value="1"/>
</dbReference>
<dbReference type="PANTHER" id="PTHR38461:SF1">
    <property type="entry name" value="4-DEOXY-L-THREO-5-HEXOSULOSE-URONATE KETOL-ISOMERASE"/>
    <property type="match status" value="1"/>
</dbReference>
<dbReference type="Pfam" id="PF04962">
    <property type="entry name" value="KduI"/>
    <property type="match status" value="1"/>
</dbReference>
<dbReference type="PIRSF" id="PIRSF006625">
    <property type="entry name" value="KduI"/>
    <property type="match status" value="1"/>
</dbReference>
<dbReference type="SUPFAM" id="SSF51182">
    <property type="entry name" value="RmlC-like cupins"/>
    <property type="match status" value="1"/>
</dbReference>
<organism>
    <name type="scientific">Escherichia coli (strain ATCC 8739 / DSM 1576 / NBRC 3972 / NCIMB 8545 / WDCM 00012 / Crooks)</name>
    <dbReference type="NCBI Taxonomy" id="481805"/>
    <lineage>
        <taxon>Bacteria</taxon>
        <taxon>Pseudomonadati</taxon>
        <taxon>Pseudomonadota</taxon>
        <taxon>Gammaproteobacteria</taxon>
        <taxon>Enterobacterales</taxon>
        <taxon>Enterobacteriaceae</taxon>
        <taxon>Escherichia</taxon>
    </lineage>
</organism>
<evidence type="ECO:0000255" key="1">
    <source>
        <dbReference type="HAMAP-Rule" id="MF_00687"/>
    </source>
</evidence>
<comment type="function">
    <text evidence="1">Catalyzes the isomerization of 5-dehydro-4-deoxy-D-glucuronate to 3-deoxy-D-glycero-2,5-hexodiulosonate.</text>
</comment>
<comment type="catalytic activity">
    <reaction evidence="1">
        <text>5-dehydro-4-deoxy-D-glucuronate = 3-deoxy-D-glycero-2,5-hexodiulosonate</text>
        <dbReference type="Rhea" id="RHEA:23896"/>
        <dbReference type="ChEBI" id="CHEBI:17117"/>
        <dbReference type="ChEBI" id="CHEBI:29071"/>
        <dbReference type="EC" id="5.3.1.17"/>
    </reaction>
</comment>
<comment type="cofactor">
    <cofactor evidence="1">
        <name>Zn(2+)</name>
        <dbReference type="ChEBI" id="CHEBI:29105"/>
    </cofactor>
    <text evidence="1">Binds 1 zinc ion per subunit.</text>
</comment>
<comment type="pathway">
    <text evidence="1">Glycan metabolism; pectin degradation; 2-dehydro-3-deoxy-D-gluconate from pectin: step 4/5.</text>
</comment>
<comment type="subunit">
    <text evidence="1">Homohexamer.</text>
</comment>
<comment type="similarity">
    <text evidence="1">Belongs to the KduI family.</text>
</comment>
<gene>
    <name evidence="1" type="primary">kduI</name>
    <name type="ordered locus">EcolC_0872</name>
</gene>
<proteinExistence type="inferred from homology"/>
<keyword id="KW-0413">Isomerase</keyword>
<keyword id="KW-0479">Metal-binding</keyword>
<keyword id="KW-0862">Zinc</keyword>
<name>KDUI_ECOLC</name>